<comment type="tissue specificity">
    <text evidence="1">Vascular tissues, specifically in phloem companion cell-sieve element complexes.</text>
</comment>
<gene>
    <name type="primary">PP2A1</name>
    <name type="ordered locus">At4g19840</name>
    <name type="ORF">T16H5.200</name>
</gene>
<reference key="1">
    <citation type="journal article" date="1999" name="Nature">
        <title>Sequence and analysis of chromosome 4 of the plant Arabidopsis thaliana.</title>
        <authorList>
            <person name="Mayer K.F.X."/>
            <person name="Schueller C."/>
            <person name="Wambutt R."/>
            <person name="Murphy G."/>
            <person name="Volckaert G."/>
            <person name="Pohl T."/>
            <person name="Duesterhoeft A."/>
            <person name="Stiekema W."/>
            <person name="Entian K.-D."/>
            <person name="Terryn N."/>
            <person name="Harris B."/>
            <person name="Ansorge W."/>
            <person name="Brandt P."/>
            <person name="Grivell L.A."/>
            <person name="Rieger M."/>
            <person name="Weichselgartner M."/>
            <person name="de Simone V."/>
            <person name="Obermaier B."/>
            <person name="Mache R."/>
            <person name="Mueller M."/>
            <person name="Kreis M."/>
            <person name="Delseny M."/>
            <person name="Puigdomenech P."/>
            <person name="Watson M."/>
            <person name="Schmidtheini T."/>
            <person name="Reichert B."/>
            <person name="Portetelle D."/>
            <person name="Perez-Alonso M."/>
            <person name="Boutry M."/>
            <person name="Bancroft I."/>
            <person name="Vos P."/>
            <person name="Hoheisel J."/>
            <person name="Zimmermann W."/>
            <person name="Wedler H."/>
            <person name="Ridley P."/>
            <person name="Langham S.-A."/>
            <person name="McCullagh B."/>
            <person name="Bilham L."/>
            <person name="Robben J."/>
            <person name="van der Schueren J."/>
            <person name="Grymonprez B."/>
            <person name="Chuang Y.-J."/>
            <person name="Vandenbussche F."/>
            <person name="Braeken M."/>
            <person name="Weltjens I."/>
            <person name="Voet M."/>
            <person name="Bastiaens I."/>
            <person name="Aert R."/>
            <person name="Defoor E."/>
            <person name="Weitzenegger T."/>
            <person name="Bothe G."/>
            <person name="Ramsperger U."/>
            <person name="Hilbert H."/>
            <person name="Braun M."/>
            <person name="Holzer E."/>
            <person name="Brandt A."/>
            <person name="Peters S."/>
            <person name="van Staveren M."/>
            <person name="Dirkse W."/>
            <person name="Mooijman P."/>
            <person name="Klein Lankhorst R."/>
            <person name="Rose M."/>
            <person name="Hauf J."/>
            <person name="Koetter P."/>
            <person name="Berneiser S."/>
            <person name="Hempel S."/>
            <person name="Feldpausch M."/>
            <person name="Lamberth S."/>
            <person name="Van den Daele H."/>
            <person name="De Keyser A."/>
            <person name="Buysshaert C."/>
            <person name="Gielen J."/>
            <person name="Villarroel R."/>
            <person name="De Clercq R."/>
            <person name="van Montagu M."/>
            <person name="Rogers J."/>
            <person name="Cronin A."/>
            <person name="Quail M.A."/>
            <person name="Bray-Allen S."/>
            <person name="Clark L."/>
            <person name="Doggett J."/>
            <person name="Hall S."/>
            <person name="Kay M."/>
            <person name="Lennard N."/>
            <person name="McLay K."/>
            <person name="Mayes R."/>
            <person name="Pettett A."/>
            <person name="Rajandream M.A."/>
            <person name="Lyne M."/>
            <person name="Benes V."/>
            <person name="Rechmann S."/>
            <person name="Borkova D."/>
            <person name="Bloecker H."/>
            <person name="Scharfe M."/>
            <person name="Grimm M."/>
            <person name="Loehnert T.-H."/>
            <person name="Dose S."/>
            <person name="de Haan M."/>
            <person name="Maarse A.C."/>
            <person name="Schaefer M."/>
            <person name="Mueller-Auer S."/>
            <person name="Gabel C."/>
            <person name="Fuchs M."/>
            <person name="Fartmann B."/>
            <person name="Granderath K."/>
            <person name="Dauner D."/>
            <person name="Herzl A."/>
            <person name="Neumann S."/>
            <person name="Argiriou A."/>
            <person name="Vitale D."/>
            <person name="Liguori R."/>
            <person name="Piravandi E."/>
            <person name="Massenet O."/>
            <person name="Quigley F."/>
            <person name="Clabauld G."/>
            <person name="Muendlein A."/>
            <person name="Felber R."/>
            <person name="Schnabl S."/>
            <person name="Hiller R."/>
            <person name="Schmidt W."/>
            <person name="Lecharny A."/>
            <person name="Aubourg S."/>
            <person name="Chefdor F."/>
            <person name="Cooke R."/>
            <person name="Berger C."/>
            <person name="Monfort A."/>
            <person name="Casacuberta E."/>
            <person name="Gibbons T."/>
            <person name="Weber N."/>
            <person name="Vandenbol M."/>
            <person name="Bargues M."/>
            <person name="Terol J."/>
            <person name="Torres A."/>
            <person name="Perez-Perez A."/>
            <person name="Purnelle B."/>
            <person name="Bent E."/>
            <person name="Johnson S."/>
            <person name="Tacon D."/>
            <person name="Jesse T."/>
            <person name="Heijnen L."/>
            <person name="Schwarz S."/>
            <person name="Scholler P."/>
            <person name="Heber S."/>
            <person name="Francs P."/>
            <person name="Bielke C."/>
            <person name="Frishman D."/>
            <person name="Haase D."/>
            <person name="Lemcke K."/>
            <person name="Mewes H.-W."/>
            <person name="Stocker S."/>
            <person name="Zaccaria P."/>
            <person name="Bevan M."/>
            <person name="Wilson R.K."/>
            <person name="de la Bastide M."/>
            <person name="Habermann K."/>
            <person name="Parnell L."/>
            <person name="Dedhia N."/>
            <person name="Gnoj L."/>
            <person name="Schutz K."/>
            <person name="Huang E."/>
            <person name="Spiegel L."/>
            <person name="Sekhon M."/>
            <person name="Murray J."/>
            <person name="Sheet P."/>
            <person name="Cordes M."/>
            <person name="Abu-Threideh J."/>
            <person name="Stoneking T."/>
            <person name="Kalicki J."/>
            <person name="Graves T."/>
            <person name="Harmon G."/>
            <person name="Edwards J."/>
            <person name="Latreille P."/>
            <person name="Courtney L."/>
            <person name="Cloud J."/>
            <person name="Abbott A."/>
            <person name="Scott K."/>
            <person name="Johnson D."/>
            <person name="Minx P."/>
            <person name="Bentley D."/>
            <person name="Fulton B."/>
            <person name="Miller N."/>
            <person name="Greco T."/>
            <person name="Kemp K."/>
            <person name="Kramer J."/>
            <person name="Fulton L."/>
            <person name="Mardis E."/>
            <person name="Dante M."/>
            <person name="Pepin K."/>
            <person name="Hillier L.W."/>
            <person name="Nelson J."/>
            <person name="Spieth J."/>
            <person name="Ryan E."/>
            <person name="Andrews S."/>
            <person name="Geisel C."/>
            <person name="Layman D."/>
            <person name="Du H."/>
            <person name="Ali J."/>
            <person name="Berghoff A."/>
            <person name="Jones K."/>
            <person name="Drone K."/>
            <person name="Cotton M."/>
            <person name="Joshu C."/>
            <person name="Antonoiu B."/>
            <person name="Zidanic M."/>
            <person name="Strong C."/>
            <person name="Sun H."/>
            <person name="Lamar B."/>
            <person name="Yordan C."/>
            <person name="Ma P."/>
            <person name="Zhong J."/>
            <person name="Preston R."/>
            <person name="Vil D."/>
            <person name="Shekher M."/>
            <person name="Matero A."/>
            <person name="Shah R."/>
            <person name="Swaby I.K."/>
            <person name="O'Shaughnessy A."/>
            <person name="Rodriguez M."/>
            <person name="Hoffman J."/>
            <person name="Till S."/>
            <person name="Granat S."/>
            <person name="Shohdy N."/>
            <person name="Hasegawa A."/>
            <person name="Hameed A."/>
            <person name="Lodhi M."/>
            <person name="Johnson A."/>
            <person name="Chen E."/>
            <person name="Marra M.A."/>
            <person name="Martienssen R."/>
            <person name="McCombie W.R."/>
        </authorList>
    </citation>
    <scope>NUCLEOTIDE SEQUENCE [LARGE SCALE GENOMIC DNA]</scope>
    <source>
        <strain>cv. Columbia</strain>
    </source>
</reference>
<reference key="2">
    <citation type="journal article" date="2017" name="Plant J.">
        <title>Araport11: a complete reannotation of the Arabidopsis thaliana reference genome.</title>
        <authorList>
            <person name="Cheng C.Y."/>
            <person name="Krishnakumar V."/>
            <person name="Chan A.P."/>
            <person name="Thibaud-Nissen F."/>
            <person name="Schobel S."/>
            <person name="Town C.D."/>
        </authorList>
    </citation>
    <scope>GENOME REANNOTATION</scope>
    <source>
        <strain>cv. Columbia</strain>
    </source>
</reference>
<reference key="3">
    <citation type="journal article" date="2003" name="Science">
        <title>Empirical analysis of transcriptional activity in the Arabidopsis genome.</title>
        <authorList>
            <person name="Yamada K."/>
            <person name="Lim J."/>
            <person name="Dale J.M."/>
            <person name="Chen H."/>
            <person name="Shinn P."/>
            <person name="Palm C.J."/>
            <person name="Southwick A.M."/>
            <person name="Wu H.C."/>
            <person name="Kim C.J."/>
            <person name="Nguyen M."/>
            <person name="Pham P.K."/>
            <person name="Cheuk R.F."/>
            <person name="Karlin-Newmann G."/>
            <person name="Liu S.X."/>
            <person name="Lam B."/>
            <person name="Sakano H."/>
            <person name="Wu T."/>
            <person name="Yu G."/>
            <person name="Miranda M."/>
            <person name="Quach H.L."/>
            <person name="Tripp M."/>
            <person name="Chang C.H."/>
            <person name="Lee J.M."/>
            <person name="Toriumi M.J."/>
            <person name="Chan M.M."/>
            <person name="Tang C.C."/>
            <person name="Onodera C.S."/>
            <person name="Deng J.M."/>
            <person name="Akiyama K."/>
            <person name="Ansari Y."/>
            <person name="Arakawa T."/>
            <person name="Banh J."/>
            <person name="Banno F."/>
            <person name="Bowser L."/>
            <person name="Brooks S.Y."/>
            <person name="Carninci P."/>
            <person name="Chao Q."/>
            <person name="Choy N."/>
            <person name="Enju A."/>
            <person name="Goldsmith A.D."/>
            <person name="Gurjal M."/>
            <person name="Hansen N.F."/>
            <person name="Hayashizaki Y."/>
            <person name="Johnson-Hopson C."/>
            <person name="Hsuan V.W."/>
            <person name="Iida K."/>
            <person name="Karnes M."/>
            <person name="Khan S."/>
            <person name="Koesema E."/>
            <person name="Ishida J."/>
            <person name="Jiang P.X."/>
            <person name="Jones T."/>
            <person name="Kawai J."/>
            <person name="Kamiya A."/>
            <person name="Meyers C."/>
            <person name="Nakajima M."/>
            <person name="Narusaka M."/>
            <person name="Seki M."/>
            <person name="Sakurai T."/>
            <person name="Satou M."/>
            <person name="Tamse R."/>
            <person name="Vaysberg M."/>
            <person name="Wallender E.K."/>
            <person name="Wong C."/>
            <person name="Yamamura Y."/>
            <person name="Yuan S."/>
            <person name="Shinozaki K."/>
            <person name="Davis R.W."/>
            <person name="Theologis A."/>
            <person name="Ecker J.R."/>
        </authorList>
    </citation>
    <scope>NUCLEOTIDE SEQUENCE [LARGE SCALE MRNA]</scope>
    <source>
        <strain>cv. Columbia</strain>
    </source>
</reference>
<reference key="4">
    <citation type="submission" date="2002-03" db="EMBL/GenBank/DDBJ databases">
        <title>Full-length cDNA from Arabidopsis thaliana.</title>
        <authorList>
            <person name="Brover V.V."/>
            <person name="Troukhan M.E."/>
            <person name="Alexandrov N.A."/>
            <person name="Lu Y.-P."/>
            <person name="Flavell R.B."/>
            <person name="Feldmann K.A."/>
        </authorList>
    </citation>
    <scope>NUCLEOTIDE SEQUENCE [LARGE SCALE MRNA]</scope>
</reference>
<reference key="5">
    <citation type="journal article" date="2003" name="Plant Physiol.">
        <title>Diversity of the superfamily of phloem lectins (phloem protein 2) in angiosperms.</title>
        <authorList>
            <person name="Dinant S."/>
            <person name="Clark A.M."/>
            <person name="Zhu Y."/>
            <person name="Vilaine F."/>
            <person name="Palauqui J.-C."/>
            <person name="Kusiak C."/>
            <person name="Thompson G.A."/>
        </authorList>
    </citation>
    <scope>TISSUE SPECIFICITY</scope>
    <scope>GENE FAMILY</scope>
    <scope>NOMENCLATURE</scope>
</reference>
<keyword id="KW-1185">Reference proteome</keyword>
<proteinExistence type="evidence at transcript level"/>
<accession>O81865</accession>
<accession>Q8LDY2</accession>
<sequence length="246" mass="28102">MSKKHCSELLPNKMFRNQDSKYLIPVQKEAPPVTTLPMKASTVKSPHNCEAILRDADPPISLSSVNLSEQLRSGVFLKPKKQIKYWVDERNSNCFMLFAKNLSITWSDDVNYWTWFTEKESPNENVEAVGLKNVCWLDITGKFDTRNLTPGIVYEVVFKVKLEDPAYGWDTPVNLKLVLPNGKEKPQEKKVSLRELPRYKWVDVRVGEFVPEKSAAGEITFSMYEHAAGVWKKGLSLKGVAIRPKQ</sequence>
<protein>
    <recommendedName>
        <fullName>Protein PHLOEM PROTEIN 2-LIKE A1</fullName>
        <shortName>AtPP2-A1</shortName>
    </recommendedName>
</protein>
<feature type="chain" id="PRO_0000285276" description="Protein PHLOEM PROTEIN 2-LIKE A1">
    <location>
        <begin position="1"/>
        <end position="246"/>
    </location>
</feature>
<feature type="sequence conflict" description="In Ref. 4; AAM62948." evidence="2" ref="4">
    <original>K</original>
    <variation>T</variation>
    <location>
        <position position="185"/>
    </location>
</feature>
<feature type="sequence conflict" description="In Ref. 4; AAM62948." evidence="2" ref="4">
    <original>KKV</original>
    <variation>QKL</variation>
    <location>
        <begin position="189"/>
        <end position="191"/>
    </location>
</feature>
<feature type="sequence conflict" description="In Ref. 4; AAM62948." evidence="2" ref="4">
    <original>A</original>
    <variation>V</variation>
    <location>
        <position position="227"/>
    </location>
</feature>
<evidence type="ECO:0000269" key="1">
    <source>
    </source>
</evidence>
<evidence type="ECO:0000305" key="2"/>
<name>P2A01_ARATH</name>
<dbReference type="EMBL" id="AL024486">
    <property type="protein sequence ID" value="CAA19701.1"/>
    <property type="molecule type" value="Genomic_DNA"/>
</dbReference>
<dbReference type="EMBL" id="AL161551">
    <property type="protein sequence ID" value="CAB78986.1"/>
    <property type="molecule type" value="Genomic_DNA"/>
</dbReference>
<dbReference type="EMBL" id="CP002687">
    <property type="protein sequence ID" value="AEE84232.1"/>
    <property type="molecule type" value="Genomic_DNA"/>
</dbReference>
<dbReference type="EMBL" id="AY090355">
    <property type="protein sequence ID" value="AAL91260.1"/>
    <property type="molecule type" value="mRNA"/>
</dbReference>
<dbReference type="EMBL" id="AY122906">
    <property type="protein sequence ID" value="AAM67439.1"/>
    <property type="molecule type" value="mRNA"/>
</dbReference>
<dbReference type="EMBL" id="AY085730">
    <property type="protein sequence ID" value="AAM62948.1"/>
    <property type="molecule type" value="mRNA"/>
</dbReference>
<dbReference type="PIR" id="T04765">
    <property type="entry name" value="T04765"/>
</dbReference>
<dbReference type="SMR" id="O81865"/>
<dbReference type="BioGRID" id="13021">
    <property type="interactions" value="2"/>
</dbReference>
<dbReference type="FunCoup" id="O81865">
    <property type="interactions" value="1072"/>
</dbReference>
<dbReference type="IntAct" id="O81865">
    <property type="interactions" value="1"/>
</dbReference>
<dbReference type="STRING" id="3702.O81865"/>
<dbReference type="PaxDb" id="3702-AT4G19840.1"/>
<dbReference type="ProteomicsDB" id="248860"/>
<dbReference type="DNASU" id="827728"/>
<dbReference type="EnsemblPlants" id="AT4G19840.1">
    <property type="protein sequence ID" value="AT4G19840.1"/>
    <property type="gene ID" value="AT4G19840"/>
</dbReference>
<dbReference type="GeneID" id="827728"/>
<dbReference type="Gramene" id="AT4G19840.1">
    <property type="protein sequence ID" value="AT4G19840.1"/>
    <property type="gene ID" value="AT4G19840"/>
</dbReference>
<dbReference type="KEGG" id="ath:AT4G19840"/>
<dbReference type="Araport" id="AT4G19840"/>
<dbReference type="TAIR" id="AT4G19840">
    <property type="gene designation" value="PP2-A1"/>
</dbReference>
<dbReference type="eggNOG" id="KOG0017">
    <property type="taxonomic scope" value="Eukaryota"/>
</dbReference>
<dbReference type="HOGENOM" id="CLU_050973_2_0_1"/>
<dbReference type="InParanoid" id="O81865"/>
<dbReference type="OMA" id="WSWHPLK"/>
<dbReference type="PhylomeDB" id="O81865"/>
<dbReference type="PRO" id="PR:O81865"/>
<dbReference type="Proteomes" id="UP000006548">
    <property type="component" value="Chromosome 4"/>
</dbReference>
<dbReference type="ExpressionAtlas" id="O81865">
    <property type="expression patterns" value="baseline and differential"/>
</dbReference>
<dbReference type="GO" id="GO:0030246">
    <property type="term" value="F:carbohydrate binding"/>
    <property type="evidence" value="ECO:0000250"/>
    <property type="project" value="TAIR"/>
</dbReference>
<dbReference type="GO" id="GO:0043394">
    <property type="term" value="F:proteoglycan binding"/>
    <property type="evidence" value="ECO:0000314"/>
    <property type="project" value="TAIR"/>
</dbReference>
<dbReference type="GO" id="GO:0009625">
    <property type="term" value="P:response to insect"/>
    <property type="evidence" value="ECO:0000314"/>
    <property type="project" value="TAIR"/>
</dbReference>
<dbReference type="InterPro" id="IPR025886">
    <property type="entry name" value="PP2-like"/>
</dbReference>
<dbReference type="InterPro" id="IPR052147">
    <property type="entry name" value="PP2-like/Lectin"/>
</dbReference>
<dbReference type="PANTHER" id="PTHR48478">
    <property type="entry name" value="LECTIN-LIKE"/>
    <property type="match status" value="1"/>
</dbReference>
<dbReference type="PANTHER" id="PTHR48478:SF1">
    <property type="entry name" value="LECTIN-LIKE"/>
    <property type="match status" value="1"/>
</dbReference>
<dbReference type="Pfam" id="PF14299">
    <property type="entry name" value="PP2"/>
    <property type="match status" value="1"/>
</dbReference>
<organism>
    <name type="scientific">Arabidopsis thaliana</name>
    <name type="common">Mouse-ear cress</name>
    <dbReference type="NCBI Taxonomy" id="3702"/>
    <lineage>
        <taxon>Eukaryota</taxon>
        <taxon>Viridiplantae</taxon>
        <taxon>Streptophyta</taxon>
        <taxon>Embryophyta</taxon>
        <taxon>Tracheophyta</taxon>
        <taxon>Spermatophyta</taxon>
        <taxon>Magnoliopsida</taxon>
        <taxon>eudicotyledons</taxon>
        <taxon>Gunneridae</taxon>
        <taxon>Pentapetalae</taxon>
        <taxon>rosids</taxon>
        <taxon>malvids</taxon>
        <taxon>Brassicales</taxon>
        <taxon>Brassicaceae</taxon>
        <taxon>Camelineae</taxon>
        <taxon>Arabidopsis</taxon>
    </lineage>
</organism>